<feature type="chain" id="PRO_0000225978" description="Chaperone protein DnaK">
    <location>
        <begin position="1"/>
        <end position="641"/>
    </location>
</feature>
<feature type="region of interest" description="Disordered" evidence="2">
    <location>
        <begin position="603"/>
        <end position="641"/>
    </location>
</feature>
<feature type="compositionally biased region" description="Polar residues" evidence="2">
    <location>
        <begin position="603"/>
        <end position="613"/>
    </location>
</feature>
<feature type="compositionally biased region" description="Acidic residues" evidence="2">
    <location>
        <begin position="627"/>
        <end position="641"/>
    </location>
</feature>
<feature type="modified residue" description="Phosphothreonine; by autocatalysis" evidence="1">
    <location>
        <position position="199"/>
    </location>
</feature>
<sequence>MAKIIGIDLGTTNSCVAILEGGKPRVIENSEGARTTPSIVAFTADNEVLVGQSAKRQAITNPKNTLFAIKRLIGRRYKDDVVQKDIKMVPYTIVEAENGDAWVEVGGKKMAPPEISARVLMKLKKDAEAYLGEEVKEAVITVPAYFNDSQRQATKDAGRIAGLDVKRIINEPTAAALAYGMDKSRGDQKIAVYDLGGGTFDISIIEIAEVDGEHQFEVLSTNGDTFLGGEDFDLRIIEYIVDEFRKEQGIDLHNDPLALQRLKESAEKAKIELSSSQQTEINLPYITADATGPKHLNVKLTRAKLEALVEDLILRTRGPCETALKDAGLKSADIDEVILVGGQTRMPKVQEFVKEIFGREPRKDVNPDEAVAVGAAIQAGVLGGQVKDVLLLDVTPLSLGIETLGGVMTKLIEKNTTIPTKATQVFSTAEDNQTAVTIHVLQGEREMARDNKSLGRFDLSDIPMAPRGVPQIEVTFDIDANGILNVSAKDKATGKQQSIVIRASSGLSEDEIKRMVKDAELHAEEDRRMHELVSARNHADAVVHATNKTLAELGDKVSGEERAKIEAALNDLKDAMGGDNKDLIEQRTSALTELSGKLAERLYTQQGGTAGSETHSHEKAGGSGGDDVVDAEFEEVRDDKR</sequence>
<proteinExistence type="inferred from homology"/>
<name>DNAK_METCA</name>
<protein>
    <recommendedName>
        <fullName evidence="1">Chaperone protein DnaK</fullName>
    </recommendedName>
    <alternativeName>
        <fullName evidence="1">HSP70</fullName>
    </alternativeName>
    <alternativeName>
        <fullName evidence="1">Heat shock 70 kDa protein</fullName>
    </alternativeName>
    <alternativeName>
        <fullName evidence="1">Heat shock protein 70</fullName>
    </alternativeName>
</protein>
<evidence type="ECO:0000255" key="1">
    <source>
        <dbReference type="HAMAP-Rule" id="MF_00332"/>
    </source>
</evidence>
<evidence type="ECO:0000256" key="2">
    <source>
        <dbReference type="SAM" id="MobiDB-lite"/>
    </source>
</evidence>
<accession>Q607A5</accession>
<comment type="function">
    <text evidence="1">Acts as a chaperone.</text>
</comment>
<comment type="induction">
    <text evidence="1">By stress conditions e.g. heat shock.</text>
</comment>
<comment type="similarity">
    <text evidence="1">Belongs to the heat shock protein 70 family.</text>
</comment>
<gene>
    <name evidence="1" type="primary">dnaK</name>
    <name type="ordered locus">MCA1856</name>
</gene>
<reference key="1">
    <citation type="journal article" date="2004" name="PLoS Biol.">
        <title>Genomic insights into methanotrophy: the complete genome sequence of Methylococcus capsulatus (Bath).</title>
        <authorList>
            <person name="Ward N.L."/>
            <person name="Larsen O."/>
            <person name="Sakwa J."/>
            <person name="Bruseth L."/>
            <person name="Khouri H.M."/>
            <person name="Durkin A.S."/>
            <person name="Dimitrov G."/>
            <person name="Jiang L."/>
            <person name="Scanlan D."/>
            <person name="Kang K.H."/>
            <person name="Lewis M.R."/>
            <person name="Nelson K.E."/>
            <person name="Methe B.A."/>
            <person name="Wu M."/>
            <person name="Heidelberg J.F."/>
            <person name="Paulsen I.T."/>
            <person name="Fouts D.E."/>
            <person name="Ravel J."/>
            <person name="Tettelin H."/>
            <person name="Ren Q."/>
            <person name="Read T.D."/>
            <person name="DeBoy R.T."/>
            <person name="Seshadri R."/>
            <person name="Salzberg S.L."/>
            <person name="Jensen H.B."/>
            <person name="Birkeland N.K."/>
            <person name="Nelson W.C."/>
            <person name="Dodson R.J."/>
            <person name="Grindhaug S.H."/>
            <person name="Holt I.E."/>
            <person name="Eidhammer I."/>
            <person name="Jonasen I."/>
            <person name="Vanaken S."/>
            <person name="Utterback T.R."/>
            <person name="Feldblyum T.V."/>
            <person name="Fraser C.M."/>
            <person name="Lillehaug J.R."/>
            <person name="Eisen J.A."/>
        </authorList>
    </citation>
    <scope>NUCLEOTIDE SEQUENCE [LARGE SCALE GENOMIC DNA]</scope>
    <source>
        <strain>ATCC 33009 / NCIMB 11132 / Bath</strain>
    </source>
</reference>
<organism>
    <name type="scientific">Methylococcus capsulatus (strain ATCC 33009 / NCIMB 11132 / Bath)</name>
    <dbReference type="NCBI Taxonomy" id="243233"/>
    <lineage>
        <taxon>Bacteria</taxon>
        <taxon>Pseudomonadati</taxon>
        <taxon>Pseudomonadota</taxon>
        <taxon>Gammaproteobacteria</taxon>
        <taxon>Methylococcales</taxon>
        <taxon>Methylococcaceae</taxon>
        <taxon>Methylococcus</taxon>
    </lineage>
</organism>
<keyword id="KW-0067">ATP-binding</keyword>
<keyword id="KW-0143">Chaperone</keyword>
<keyword id="KW-0547">Nucleotide-binding</keyword>
<keyword id="KW-0597">Phosphoprotein</keyword>
<keyword id="KW-1185">Reference proteome</keyword>
<keyword id="KW-0346">Stress response</keyword>
<dbReference type="EMBL" id="AE017282">
    <property type="protein sequence ID" value="AAU91907.1"/>
    <property type="molecule type" value="Genomic_DNA"/>
</dbReference>
<dbReference type="RefSeq" id="WP_010961108.1">
    <property type="nucleotide sequence ID" value="NC_002977.6"/>
</dbReference>
<dbReference type="SMR" id="Q607A5"/>
<dbReference type="STRING" id="243233.MCA1856"/>
<dbReference type="GeneID" id="88224101"/>
<dbReference type="KEGG" id="mca:MCA1856"/>
<dbReference type="eggNOG" id="COG0443">
    <property type="taxonomic scope" value="Bacteria"/>
</dbReference>
<dbReference type="HOGENOM" id="CLU_005965_2_1_6"/>
<dbReference type="Proteomes" id="UP000006821">
    <property type="component" value="Chromosome"/>
</dbReference>
<dbReference type="GO" id="GO:0005524">
    <property type="term" value="F:ATP binding"/>
    <property type="evidence" value="ECO:0007669"/>
    <property type="project" value="UniProtKB-UniRule"/>
</dbReference>
<dbReference type="GO" id="GO:0140662">
    <property type="term" value="F:ATP-dependent protein folding chaperone"/>
    <property type="evidence" value="ECO:0007669"/>
    <property type="project" value="InterPro"/>
</dbReference>
<dbReference type="GO" id="GO:0051082">
    <property type="term" value="F:unfolded protein binding"/>
    <property type="evidence" value="ECO:0007669"/>
    <property type="project" value="InterPro"/>
</dbReference>
<dbReference type="CDD" id="cd10234">
    <property type="entry name" value="ASKHA_NBD_HSP70_DnaK-like"/>
    <property type="match status" value="1"/>
</dbReference>
<dbReference type="FunFam" id="2.60.34.10:FF:000014">
    <property type="entry name" value="Chaperone protein DnaK HSP70"/>
    <property type="match status" value="1"/>
</dbReference>
<dbReference type="FunFam" id="1.20.1270.10:FF:000001">
    <property type="entry name" value="Molecular chaperone DnaK"/>
    <property type="match status" value="1"/>
</dbReference>
<dbReference type="FunFam" id="3.30.420.40:FF:000004">
    <property type="entry name" value="Molecular chaperone DnaK"/>
    <property type="match status" value="1"/>
</dbReference>
<dbReference type="FunFam" id="3.90.640.10:FF:000003">
    <property type="entry name" value="Molecular chaperone DnaK"/>
    <property type="match status" value="1"/>
</dbReference>
<dbReference type="Gene3D" id="1.20.1270.10">
    <property type="match status" value="1"/>
</dbReference>
<dbReference type="Gene3D" id="3.30.420.40">
    <property type="match status" value="2"/>
</dbReference>
<dbReference type="Gene3D" id="3.90.640.10">
    <property type="entry name" value="Actin, Chain A, domain 4"/>
    <property type="match status" value="1"/>
</dbReference>
<dbReference type="Gene3D" id="2.60.34.10">
    <property type="entry name" value="Substrate Binding Domain Of DNAk, Chain A, domain 1"/>
    <property type="match status" value="1"/>
</dbReference>
<dbReference type="HAMAP" id="MF_00332">
    <property type="entry name" value="DnaK"/>
    <property type="match status" value="1"/>
</dbReference>
<dbReference type="InterPro" id="IPR043129">
    <property type="entry name" value="ATPase_NBD"/>
</dbReference>
<dbReference type="InterPro" id="IPR012725">
    <property type="entry name" value="Chaperone_DnaK"/>
</dbReference>
<dbReference type="InterPro" id="IPR018181">
    <property type="entry name" value="Heat_shock_70_CS"/>
</dbReference>
<dbReference type="InterPro" id="IPR029048">
    <property type="entry name" value="HSP70_C_sf"/>
</dbReference>
<dbReference type="InterPro" id="IPR029047">
    <property type="entry name" value="HSP70_peptide-bd_sf"/>
</dbReference>
<dbReference type="InterPro" id="IPR013126">
    <property type="entry name" value="Hsp_70_fam"/>
</dbReference>
<dbReference type="NCBIfam" id="NF001413">
    <property type="entry name" value="PRK00290.1"/>
    <property type="match status" value="1"/>
</dbReference>
<dbReference type="NCBIfam" id="NF003520">
    <property type="entry name" value="PRK05183.1"/>
    <property type="match status" value="1"/>
</dbReference>
<dbReference type="NCBIfam" id="TIGR02350">
    <property type="entry name" value="prok_dnaK"/>
    <property type="match status" value="1"/>
</dbReference>
<dbReference type="PANTHER" id="PTHR19375">
    <property type="entry name" value="HEAT SHOCK PROTEIN 70KDA"/>
    <property type="match status" value="1"/>
</dbReference>
<dbReference type="Pfam" id="PF00012">
    <property type="entry name" value="HSP70"/>
    <property type="match status" value="1"/>
</dbReference>
<dbReference type="PRINTS" id="PR00301">
    <property type="entry name" value="HEATSHOCK70"/>
</dbReference>
<dbReference type="SUPFAM" id="SSF53067">
    <property type="entry name" value="Actin-like ATPase domain"/>
    <property type="match status" value="2"/>
</dbReference>
<dbReference type="SUPFAM" id="SSF100934">
    <property type="entry name" value="Heat shock protein 70kD (HSP70), C-terminal subdomain"/>
    <property type="match status" value="1"/>
</dbReference>
<dbReference type="SUPFAM" id="SSF100920">
    <property type="entry name" value="Heat shock protein 70kD (HSP70), peptide-binding domain"/>
    <property type="match status" value="1"/>
</dbReference>
<dbReference type="PROSITE" id="PS00297">
    <property type="entry name" value="HSP70_1"/>
    <property type="match status" value="1"/>
</dbReference>
<dbReference type="PROSITE" id="PS00329">
    <property type="entry name" value="HSP70_2"/>
    <property type="match status" value="1"/>
</dbReference>
<dbReference type="PROSITE" id="PS01036">
    <property type="entry name" value="HSP70_3"/>
    <property type="match status" value="1"/>
</dbReference>